<comment type="function">
    <text evidence="1">One of the proteins required for the normal export of preproteins out of the cell cytoplasm. It is a molecular chaperone that binds to a subset of precursor proteins, maintaining them in a translocation-competent state. It also specifically binds to its receptor SecA.</text>
</comment>
<comment type="subunit">
    <text evidence="1">Homotetramer, a dimer of dimers. One homotetramer interacts with 1 SecA dimer.</text>
</comment>
<comment type="subcellular location">
    <subcellularLocation>
        <location evidence="1">Cytoplasm</location>
    </subcellularLocation>
</comment>
<comment type="similarity">
    <text evidence="1">Belongs to the SecB family.</text>
</comment>
<proteinExistence type="inferred from homology"/>
<dbReference type="EMBL" id="CP000109">
    <property type="protein sequence ID" value="ABB42543.1"/>
    <property type="molecule type" value="Genomic_DNA"/>
</dbReference>
<dbReference type="SMR" id="Q31E80"/>
<dbReference type="STRING" id="317025.Tcr_1953"/>
<dbReference type="KEGG" id="tcx:Tcr_1953"/>
<dbReference type="eggNOG" id="COG1952">
    <property type="taxonomic scope" value="Bacteria"/>
</dbReference>
<dbReference type="HOGENOM" id="CLU_111574_1_0_6"/>
<dbReference type="OrthoDB" id="9795145at2"/>
<dbReference type="GO" id="GO:0005737">
    <property type="term" value="C:cytoplasm"/>
    <property type="evidence" value="ECO:0007669"/>
    <property type="project" value="UniProtKB-SubCell"/>
</dbReference>
<dbReference type="GO" id="GO:0051082">
    <property type="term" value="F:unfolded protein binding"/>
    <property type="evidence" value="ECO:0007669"/>
    <property type="project" value="InterPro"/>
</dbReference>
<dbReference type="GO" id="GO:0006457">
    <property type="term" value="P:protein folding"/>
    <property type="evidence" value="ECO:0007669"/>
    <property type="project" value="UniProtKB-UniRule"/>
</dbReference>
<dbReference type="GO" id="GO:0051262">
    <property type="term" value="P:protein tetramerization"/>
    <property type="evidence" value="ECO:0007669"/>
    <property type="project" value="InterPro"/>
</dbReference>
<dbReference type="GO" id="GO:0015031">
    <property type="term" value="P:protein transport"/>
    <property type="evidence" value="ECO:0007669"/>
    <property type="project" value="UniProtKB-UniRule"/>
</dbReference>
<dbReference type="Gene3D" id="3.10.420.10">
    <property type="entry name" value="SecB-like"/>
    <property type="match status" value="1"/>
</dbReference>
<dbReference type="HAMAP" id="MF_00821">
    <property type="entry name" value="SecB"/>
    <property type="match status" value="1"/>
</dbReference>
<dbReference type="InterPro" id="IPR003708">
    <property type="entry name" value="SecB"/>
</dbReference>
<dbReference type="InterPro" id="IPR035958">
    <property type="entry name" value="SecB-like_sf"/>
</dbReference>
<dbReference type="NCBIfam" id="NF004393">
    <property type="entry name" value="PRK05751.1-4"/>
    <property type="match status" value="1"/>
</dbReference>
<dbReference type="NCBIfam" id="TIGR00809">
    <property type="entry name" value="secB"/>
    <property type="match status" value="1"/>
</dbReference>
<dbReference type="PANTHER" id="PTHR36918">
    <property type="match status" value="1"/>
</dbReference>
<dbReference type="PANTHER" id="PTHR36918:SF1">
    <property type="entry name" value="PROTEIN-EXPORT PROTEIN SECB"/>
    <property type="match status" value="1"/>
</dbReference>
<dbReference type="Pfam" id="PF02556">
    <property type="entry name" value="SecB"/>
    <property type="match status" value="1"/>
</dbReference>
<dbReference type="PRINTS" id="PR01594">
    <property type="entry name" value="SECBCHAPRONE"/>
</dbReference>
<dbReference type="SUPFAM" id="SSF54611">
    <property type="entry name" value="SecB-like"/>
    <property type="match status" value="1"/>
</dbReference>
<evidence type="ECO:0000255" key="1">
    <source>
        <dbReference type="HAMAP-Rule" id="MF_00821"/>
    </source>
</evidence>
<reference key="1">
    <citation type="journal article" date="2006" name="PLoS Biol.">
        <title>The genome of deep-sea vent chemolithoautotroph Thiomicrospira crunogena XCL-2.</title>
        <authorList>
            <person name="Scott K.M."/>
            <person name="Sievert S.M."/>
            <person name="Abril F.N."/>
            <person name="Ball L.A."/>
            <person name="Barrett C.J."/>
            <person name="Blake R.A."/>
            <person name="Boller A.J."/>
            <person name="Chain P.S.G."/>
            <person name="Clark J.A."/>
            <person name="Davis C.R."/>
            <person name="Detter C."/>
            <person name="Do K.F."/>
            <person name="Dobrinski K.P."/>
            <person name="Faza B.I."/>
            <person name="Fitzpatrick K.A."/>
            <person name="Freyermuth S.K."/>
            <person name="Harmer T.L."/>
            <person name="Hauser L.J."/>
            <person name="Huegler M."/>
            <person name="Kerfeld C.A."/>
            <person name="Klotz M.G."/>
            <person name="Kong W.W."/>
            <person name="Land M."/>
            <person name="Lapidus A."/>
            <person name="Larimer F.W."/>
            <person name="Longo D.L."/>
            <person name="Lucas S."/>
            <person name="Malfatti S.A."/>
            <person name="Massey S.E."/>
            <person name="Martin D.D."/>
            <person name="McCuddin Z."/>
            <person name="Meyer F."/>
            <person name="Moore J.L."/>
            <person name="Ocampo L.H. Jr."/>
            <person name="Paul J.H."/>
            <person name="Paulsen I.T."/>
            <person name="Reep D.K."/>
            <person name="Ren Q."/>
            <person name="Ross R.L."/>
            <person name="Sato P.Y."/>
            <person name="Thomas P."/>
            <person name="Tinkham L.E."/>
            <person name="Zeruth G.T."/>
        </authorList>
    </citation>
    <scope>NUCLEOTIDE SEQUENCE [LARGE SCALE GENOMIC DNA]</scope>
    <source>
        <strain>DSM 25203 / XCL-2</strain>
    </source>
</reference>
<name>SECB_HYDCU</name>
<keyword id="KW-0143">Chaperone</keyword>
<keyword id="KW-0963">Cytoplasm</keyword>
<keyword id="KW-0653">Protein transport</keyword>
<keyword id="KW-0811">Translocation</keyword>
<keyword id="KW-0813">Transport</keyword>
<accession>Q31E80</accession>
<protein>
    <recommendedName>
        <fullName evidence="1">Protein-export protein SecB</fullName>
    </recommendedName>
</protein>
<feature type="chain" id="PRO_1000062532" description="Protein-export protein SecB">
    <location>
        <begin position="1"/>
        <end position="149"/>
    </location>
</feature>
<sequence>MSEENQEKQFAIQKVYTRNVSFEAPNSPEIFTQDFQPQLDVDLNVESRSLEGGVFHVVVRVTATTKMDDKTAFLCEVEQAGIFTLMGFDEGETNYLLGVQCPNTLFPYAREAVSDLVTRGGFPQLLLEPVNFEGIYADHLQKQAESTKQ</sequence>
<organism>
    <name type="scientific">Hydrogenovibrio crunogenus (strain DSM 25203 / XCL-2)</name>
    <name type="common">Thiomicrospira crunogena</name>
    <dbReference type="NCBI Taxonomy" id="317025"/>
    <lineage>
        <taxon>Bacteria</taxon>
        <taxon>Pseudomonadati</taxon>
        <taxon>Pseudomonadota</taxon>
        <taxon>Gammaproteobacteria</taxon>
        <taxon>Thiotrichales</taxon>
        <taxon>Piscirickettsiaceae</taxon>
        <taxon>Hydrogenovibrio</taxon>
    </lineage>
</organism>
<gene>
    <name evidence="1" type="primary">secB</name>
    <name type="ordered locus">Tcr_1953</name>
</gene>